<reference key="1">
    <citation type="submission" date="2001-09" db="EMBL/GenBank/DDBJ databases">
        <title>Phylogeny of Cervidae based on mitochondrial genes.</title>
        <authorList>
            <person name="Ludt C.J."/>
            <person name="Kuehn R."/>
            <person name="Schroeder W."/>
            <person name="Rottmann O."/>
        </authorList>
    </citation>
    <scope>NUCLEOTIDE SEQUENCE [GENOMIC DNA]</scope>
    <source>
        <tissue>Spongiosa bone</tissue>
    </source>
</reference>
<name>CYB_ELADA</name>
<organism>
    <name type="scientific">Elaphurus davidianus</name>
    <name type="common">Pere David's deer</name>
    <dbReference type="NCBI Taxonomy" id="43332"/>
    <lineage>
        <taxon>Eukaryota</taxon>
        <taxon>Metazoa</taxon>
        <taxon>Chordata</taxon>
        <taxon>Craniata</taxon>
        <taxon>Vertebrata</taxon>
        <taxon>Euteleostomi</taxon>
        <taxon>Mammalia</taxon>
        <taxon>Eutheria</taxon>
        <taxon>Laurasiatheria</taxon>
        <taxon>Artiodactyla</taxon>
        <taxon>Ruminantia</taxon>
        <taxon>Pecora</taxon>
        <taxon>Cervidae</taxon>
        <taxon>Cervinae</taxon>
        <taxon>Elaphurus</taxon>
    </lineage>
</organism>
<comment type="function">
    <text evidence="2">Component of the ubiquinol-cytochrome c reductase complex (complex III or cytochrome b-c1 complex) that is part of the mitochondrial respiratory chain. The b-c1 complex mediates electron transfer from ubiquinol to cytochrome c. Contributes to the generation of a proton gradient across the mitochondrial membrane that is then used for ATP synthesis.</text>
</comment>
<comment type="cofactor">
    <cofactor evidence="2">
        <name>heme b</name>
        <dbReference type="ChEBI" id="CHEBI:60344"/>
    </cofactor>
    <text evidence="2">Binds 2 heme b groups non-covalently.</text>
</comment>
<comment type="subunit">
    <text evidence="2">The cytochrome bc1 complex contains 11 subunits: 3 respiratory subunits (MT-CYB, CYC1 and UQCRFS1), 2 core proteins (UQCRC1 and UQCRC2) and 6 low-molecular weight proteins (UQCRH/QCR6, UQCRB/QCR7, UQCRQ/QCR8, UQCR10/QCR9, UQCR11/QCR10 and a cleavage product of UQCRFS1). This cytochrome bc1 complex then forms a dimer.</text>
</comment>
<comment type="subcellular location">
    <subcellularLocation>
        <location evidence="2">Mitochondrion inner membrane</location>
        <topology evidence="2">Multi-pass membrane protein</topology>
    </subcellularLocation>
</comment>
<comment type="miscellaneous">
    <text evidence="1">Heme 1 (or BL or b562) is low-potential and absorbs at about 562 nm, and heme 2 (or BH or b566) is high-potential and absorbs at about 566 nm.</text>
</comment>
<comment type="similarity">
    <text evidence="3 4">Belongs to the cytochrome b family.</text>
</comment>
<comment type="caution">
    <text evidence="2">The full-length protein contains only eight transmembrane helices, not nine as predicted by bioinformatics tools.</text>
</comment>
<keyword id="KW-0249">Electron transport</keyword>
<keyword id="KW-0349">Heme</keyword>
<keyword id="KW-0408">Iron</keyword>
<keyword id="KW-0472">Membrane</keyword>
<keyword id="KW-0479">Metal-binding</keyword>
<keyword id="KW-0496">Mitochondrion</keyword>
<keyword id="KW-0999">Mitochondrion inner membrane</keyword>
<keyword id="KW-0679">Respiratory chain</keyword>
<keyword id="KW-0812">Transmembrane</keyword>
<keyword id="KW-1133">Transmembrane helix</keyword>
<keyword id="KW-0813">Transport</keyword>
<keyword id="KW-0830">Ubiquinone</keyword>
<evidence type="ECO:0000250" key="1"/>
<evidence type="ECO:0000250" key="2">
    <source>
        <dbReference type="UniProtKB" id="P00157"/>
    </source>
</evidence>
<evidence type="ECO:0000255" key="3">
    <source>
        <dbReference type="PROSITE-ProRule" id="PRU00967"/>
    </source>
</evidence>
<evidence type="ECO:0000255" key="4">
    <source>
        <dbReference type="PROSITE-ProRule" id="PRU00968"/>
    </source>
</evidence>
<sequence>MTNIRKTHPLMKIVNNAFIDLPAPSNISSWWNFGSLLGICLILQILTGLFLAMHYTSDTMTAFSSVTHICRDVNYGWIIRYMHANGASMFFICLFMHVGRGLYYGSYTFLETWNIGVILLFTVMATAFVGYVLPWGQMSFWGATVITNLLSAIPYIGTNLVEWIWGGFSVDKATLTRFFAFHFILPFIIAALAMVHLLFLHETGSINPTGIPSDADKIPFHPYYTIKDILGMLLLVLFLMLLVLFAPDLLGDPDNYTPANPLNTPPHIKPEWYFLFAYAILRSIPNKLGGVLALVSSILILILMPLLHTSKQRSMMFRPFSQCLFWILVADLLTLTWIGGQPVEYPFIIIGQLASILYFLIILVLMPVTSTIENNLLKW</sequence>
<proteinExistence type="inferred from homology"/>
<protein>
    <recommendedName>
        <fullName>Cytochrome b</fullName>
    </recommendedName>
    <alternativeName>
        <fullName>Complex III subunit 3</fullName>
    </alternativeName>
    <alternativeName>
        <fullName>Complex III subunit III</fullName>
    </alternativeName>
    <alternativeName>
        <fullName>Cytochrome b-c1 complex subunit 3</fullName>
    </alternativeName>
    <alternativeName>
        <fullName>Ubiquinol-cytochrome-c reductase complex cytochrome b subunit</fullName>
    </alternativeName>
</protein>
<accession>Q94QD3</accession>
<gene>
    <name type="primary">MT-CYB</name>
    <name type="synonym">COB</name>
    <name type="synonym">CYTB</name>
    <name type="synonym">MTCYB</name>
</gene>
<dbReference type="EMBL" id="AF423194">
    <property type="protein sequence ID" value="AAL17836.1"/>
    <property type="molecule type" value="Genomic_DNA"/>
</dbReference>
<dbReference type="SMR" id="Q94QD3"/>
<dbReference type="GO" id="GO:0005743">
    <property type="term" value="C:mitochondrial inner membrane"/>
    <property type="evidence" value="ECO:0007669"/>
    <property type="project" value="UniProtKB-SubCell"/>
</dbReference>
<dbReference type="GO" id="GO:0045275">
    <property type="term" value="C:respiratory chain complex III"/>
    <property type="evidence" value="ECO:0007669"/>
    <property type="project" value="InterPro"/>
</dbReference>
<dbReference type="GO" id="GO:0046872">
    <property type="term" value="F:metal ion binding"/>
    <property type="evidence" value="ECO:0007669"/>
    <property type="project" value="UniProtKB-KW"/>
</dbReference>
<dbReference type="GO" id="GO:0008121">
    <property type="term" value="F:ubiquinol-cytochrome-c reductase activity"/>
    <property type="evidence" value="ECO:0007669"/>
    <property type="project" value="InterPro"/>
</dbReference>
<dbReference type="GO" id="GO:0006122">
    <property type="term" value="P:mitochondrial electron transport, ubiquinol to cytochrome c"/>
    <property type="evidence" value="ECO:0007669"/>
    <property type="project" value="TreeGrafter"/>
</dbReference>
<dbReference type="CDD" id="cd00290">
    <property type="entry name" value="cytochrome_b_C"/>
    <property type="match status" value="1"/>
</dbReference>
<dbReference type="CDD" id="cd00284">
    <property type="entry name" value="Cytochrome_b_N"/>
    <property type="match status" value="1"/>
</dbReference>
<dbReference type="FunFam" id="1.20.810.10:FF:000002">
    <property type="entry name" value="Cytochrome b"/>
    <property type="match status" value="1"/>
</dbReference>
<dbReference type="Gene3D" id="1.20.810.10">
    <property type="entry name" value="Cytochrome Bc1 Complex, Chain C"/>
    <property type="match status" value="1"/>
</dbReference>
<dbReference type="InterPro" id="IPR005798">
    <property type="entry name" value="Cyt_b/b6_C"/>
</dbReference>
<dbReference type="InterPro" id="IPR036150">
    <property type="entry name" value="Cyt_b/b6_C_sf"/>
</dbReference>
<dbReference type="InterPro" id="IPR005797">
    <property type="entry name" value="Cyt_b/b6_N"/>
</dbReference>
<dbReference type="InterPro" id="IPR027387">
    <property type="entry name" value="Cytb/b6-like_sf"/>
</dbReference>
<dbReference type="InterPro" id="IPR030689">
    <property type="entry name" value="Cytochrome_b"/>
</dbReference>
<dbReference type="InterPro" id="IPR048260">
    <property type="entry name" value="Cytochrome_b_C_euk/bac"/>
</dbReference>
<dbReference type="InterPro" id="IPR048259">
    <property type="entry name" value="Cytochrome_b_N_euk/bac"/>
</dbReference>
<dbReference type="InterPro" id="IPR016174">
    <property type="entry name" value="Di-haem_cyt_TM"/>
</dbReference>
<dbReference type="PANTHER" id="PTHR19271">
    <property type="entry name" value="CYTOCHROME B"/>
    <property type="match status" value="1"/>
</dbReference>
<dbReference type="PANTHER" id="PTHR19271:SF16">
    <property type="entry name" value="CYTOCHROME B"/>
    <property type="match status" value="1"/>
</dbReference>
<dbReference type="Pfam" id="PF00032">
    <property type="entry name" value="Cytochrom_B_C"/>
    <property type="match status" value="1"/>
</dbReference>
<dbReference type="Pfam" id="PF00033">
    <property type="entry name" value="Cytochrome_B"/>
    <property type="match status" value="1"/>
</dbReference>
<dbReference type="PIRSF" id="PIRSF038885">
    <property type="entry name" value="COB"/>
    <property type="match status" value="1"/>
</dbReference>
<dbReference type="SUPFAM" id="SSF81648">
    <property type="entry name" value="a domain/subunit of cytochrome bc1 complex (Ubiquinol-cytochrome c reductase)"/>
    <property type="match status" value="1"/>
</dbReference>
<dbReference type="SUPFAM" id="SSF81342">
    <property type="entry name" value="Transmembrane di-heme cytochromes"/>
    <property type="match status" value="1"/>
</dbReference>
<dbReference type="PROSITE" id="PS51003">
    <property type="entry name" value="CYTB_CTER"/>
    <property type="match status" value="1"/>
</dbReference>
<dbReference type="PROSITE" id="PS51002">
    <property type="entry name" value="CYTB_NTER"/>
    <property type="match status" value="1"/>
</dbReference>
<geneLocation type="mitochondrion"/>
<feature type="chain" id="PRO_0000254800" description="Cytochrome b">
    <location>
        <begin position="1"/>
        <end position="379"/>
    </location>
</feature>
<feature type="transmembrane region" description="Helical" evidence="2">
    <location>
        <begin position="33"/>
        <end position="53"/>
    </location>
</feature>
<feature type="transmembrane region" description="Helical" evidence="2">
    <location>
        <begin position="77"/>
        <end position="98"/>
    </location>
</feature>
<feature type="transmembrane region" description="Helical" evidence="2">
    <location>
        <begin position="113"/>
        <end position="133"/>
    </location>
</feature>
<feature type="transmembrane region" description="Helical" evidence="2">
    <location>
        <begin position="178"/>
        <end position="198"/>
    </location>
</feature>
<feature type="transmembrane region" description="Helical" evidence="2">
    <location>
        <begin position="226"/>
        <end position="246"/>
    </location>
</feature>
<feature type="transmembrane region" description="Helical" evidence="2">
    <location>
        <begin position="288"/>
        <end position="308"/>
    </location>
</feature>
<feature type="transmembrane region" description="Helical" evidence="2">
    <location>
        <begin position="320"/>
        <end position="340"/>
    </location>
</feature>
<feature type="transmembrane region" description="Helical" evidence="2">
    <location>
        <begin position="347"/>
        <end position="367"/>
    </location>
</feature>
<feature type="binding site" description="axial binding residue" evidence="2">
    <location>
        <position position="83"/>
    </location>
    <ligand>
        <name>heme b</name>
        <dbReference type="ChEBI" id="CHEBI:60344"/>
        <label>b562</label>
    </ligand>
    <ligandPart>
        <name>Fe</name>
        <dbReference type="ChEBI" id="CHEBI:18248"/>
    </ligandPart>
</feature>
<feature type="binding site" description="axial binding residue" evidence="2">
    <location>
        <position position="97"/>
    </location>
    <ligand>
        <name>heme b</name>
        <dbReference type="ChEBI" id="CHEBI:60344"/>
        <label>b566</label>
    </ligand>
    <ligandPart>
        <name>Fe</name>
        <dbReference type="ChEBI" id="CHEBI:18248"/>
    </ligandPart>
</feature>
<feature type="binding site" description="axial binding residue" evidence="2">
    <location>
        <position position="182"/>
    </location>
    <ligand>
        <name>heme b</name>
        <dbReference type="ChEBI" id="CHEBI:60344"/>
        <label>b562</label>
    </ligand>
    <ligandPart>
        <name>Fe</name>
        <dbReference type="ChEBI" id="CHEBI:18248"/>
    </ligandPart>
</feature>
<feature type="binding site" description="axial binding residue" evidence="2">
    <location>
        <position position="196"/>
    </location>
    <ligand>
        <name>heme b</name>
        <dbReference type="ChEBI" id="CHEBI:60344"/>
        <label>b566</label>
    </ligand>
    <ligandPart>
        <name>Fe</name>
        <dbReference type="ChEBI" id="CHEBI:18248"/>
    </ligandPart>
</feature>
<feature type="binding site" evidence="2">
    <location>
        <position position="201"/>
    </location>
    <ligand>
        <name>a ubiquinone</name>
        <dbReference type="ChEBI" id="CHEBI:16389"/>
    </ligand>
</feature>